<dbReference type="EC" id="2.7.2.3" evidence="4"/>
<dbReference type="EMBL" id="S54965">
    <property type="protein sequence ID" value="AAB25344.1"/>
    <property type="molecule type" value="Genomic_DNA"/>
</dbReference>
<dbReference type="PIR" id="S28922">
    <property type="entry name" value="S28922"/>
</dbReference>
<dbReference type="SMR" id="P33161"/>
<dbReference type="UniPathway" id="UPA00109">
    <property type="reaction ID" value="UER00185"/>
</dbReference>
<dbReference type="GO" id="GO:0005829">
    <property type="term" value="C:cytosol"/>
    <property type="evidence" value="ECO:0007669"/>
    <property type="project" value="TreeGrafter"/>
</dbReference>
<dbReference type="GO" id="GO:0005739">
    <property type="term" value="C:mitochondrion"/>
    <property type="evidence" value="ECO:0007669"/>
    <property type="project" value="UniProtKB-SubCell"/>
</dbReference>
<dbReference type="GO" id="GO:0043531">
    <property type="term" value="F:ADP binding"/>
    <property type="evidence" value="ECO:0007669"/>
    <property type="project" value="TreeGrafter"/>
</dbReference>
<dbReference type="GO" id="GO:0005524">
    <property type="term" value="F:ATP binding"/>
    <property type="evidence" value="ECO:0007669"/>
    <property type="project" value="UniProtKB-KW"/>
</dbReference>
<dbReference type="GO" id="GO:0046872">
    <property type="term" value="F:metal ion binding"/>
    <property type="evidence" value="ECO:0007669"/>
    <property type="project" value="UniProtKB-KW"/>
</dbReference>
<dbReference type="GO" id="GO:0004618">
    <property type="term" value="F:phosphoglycerate kinase activity"/>
    <property type="evidence" value="ECO:0007669"/>
    <property type="project" value="UniProtKB-EC"/>
</dbReference>
<dbReference type="GO" id="GO:0006094">
    <property type="term" value="P:gluconeogenesis"/>
    <property type="evidence" value="ECO:0007669"/>
    <property type="project" value="TreeGrafter"/>
</dbReference>
<dbReference type="GO" id="GO:0006096">
    <property type="term" value="P:glycolytic process"/>
    <property type="evidence" value="ECO:0007669"/>
    <property type="project" value="UniProtKB-UniPathway"/>
</dbReference>
<dbReference type="CDD" id="cd00318">
    <property type="entry name" value="Phosphoglycerate_kinase"/>
    <property type="match status" value="1"/>
</dbReference>
<dbReference type="FunFam" id="3.40.50.1260:FF:000019">
    <property type="entry name" value="Phosphoglycerate kinase 1"/>
    <property type="match status" value="1"/>
</dbReference>
<dbReference type="FunFam" id="3.40.50.1260:FF:000031">
    <property type="entry name" value="Phosphoglycerate kinase 1"/>
    <property type="match status" value="1"/>
</dbReference>
<dbReference type="Gene3D" id="3.40.50.1260">
    <property type="entry name" value="Phosphoglycerate kinase, N-terminal domain"/>
    <property type="match status" value="3"/>
</dbReference>
<dbReference type="HAMAP" id="MF_00145">
    <property type="entry name" value="Phosphoglyc_kinase"/>
    <property type="match status" value="1"/>
</dbReference>
<dbReference type="InterPro" id="IPR001576">
    <property type="entry name" value="Phosphoglycerate_kinase"/>
</dbReference>
<dbReference type="InterPro" id="IPR015911">
    <property type="entry name" value="Phosphoglycerate_kinase_CS"/>
</dbReference>
<dbReference type="InterPro" id="IPR015824">
    <property type="entry name" value="Phosphoglycerate_kinase_N"/>
</dbReference>
<dbReference type="InterPro" id="IPR036043">
    <property type="entry name" value="Phosphoglycerate_kinase_sf"/>
</dbReference>
<dbReference type="PANTHER" id="PTHR11406">
    <property type="entry name" value="PHOSPHOGLYCERATE KINASE"/>
    <property type="match status" value="1"/>
</dbReference>
<dbReference type="PANTHER" id="PTHR11406:SF0">
    <property type="entry name" value="PHOSPHOGLYCERATE KINASE"/>
    <property type="match status" value="1"/>
</dbReference>
<dbReference type="Pfam" id="PF00162">
    <property type="entry name" value="PGK"/>
    <property type="match status" value="1"/>
</dbReference>
<dbReference type="PIRSF" id="PIRSF000724">
    <property type="entry name" value="Pgk"/>
    <property type="match status" value="1"/>
</dbReference>
<dbReference type="PRINTS" id="PR00477">
    <property type="entry name" value="PHGLYCKINASE"/>
</dbReference>
<dbReference type="SUPFAM" id="SSF53748">
    <property type="entry name" value="Phosphoglycerate kinase"/>
    <property type="match status" value="1"/>
</dbReference>
<dbReference type="PROSITE" id="PS00111">
    <property type="entry name" value="PGLYCERATE_KINASE"/>
    <property type="match status" value="1"/>
</dbReference>
<accession>P33161</accession>
<sequence>MSLSNKLPVTDVDLKGKRVLIRVDFNVPLDENKNVTNPQRIVGALPTIKYAIDNGAKAVVLMSHLGRPDGKVNPKYSLKPVVPVLEKLLGKSVTFAEDCVGPQTEETVNKASDGQVILLENLRFHAEEEGSSKDAEGKKVKADKADVDAFRKGLTALGDVYVNDAFGTAHRAHSSMVGVDLPQKAAGFLVKKELEYFAKALESPARPFLAILGGAKVSDKIQLIDNLLPKVNSLIITGGMAFTFKKTLENVKIGNSLFDEAGSKIVGEIVEKAKKYNVEIVLPVDYVTADKFSADATVGAATDATGIPDGYMGLDVGPESVKLYQKTIAEAKTILWNGPPGVFELKPFASATEATLDAAVKAAESGSIVIIGGGDTATVAAKYKVEDKISHVSTGGGASLELLEGKELPGVAALSSK</sequence>
<gene>
    <name type="primary">PGKA</name>
    <name type="synonym">PGK</name>
</gene>
<comment type="function">
    <text evidence="2 3 4">Catalyzes one of the two ATP producing reactions in the glycolytic pathway via the reversible conversion of 1,3-diphosphoglycerate to 3-phosphoglycerate (By similarity). Both L- and D- forms of purine and pyrimidine nucleotides can be used as substrates, but the activity is much lower on pyrimidines (By similarity). Negatively regulates the biosynthesis of acetyl-CoA from pyruvate in the mitochondrion (By similarity).</text>
</comment>
<comment type="catalytic activity">
    <reaction evidence="4">
        <text>(2R)-3-phosphoglycerate + ATP = (2R)-3-phospho-glyceroyl phosphate + ADP</text>
        <dbReference type="Rhea" id="RHEA:14801"/>
        <dbReference type="ChEBI" id="CHEBI:30616"/>
        <dbReference type="ChEBI" id="CHEBI:57604"/>
        <dbReference type="ChEBI" id="CHEBI:58272"/>
        <dbReference type="ChEBI" id="CHEBI:456216"/>
        <dbReference type="EC" id="2.7.2.3"/>
    </reaction>
</comment>
<comment type="cofactor">
    <cofactor evidence="3">
        <name>Mg(2+)</name>
        <dbReference type="ChEBI" id="CHEBI:18420"/>
    </cofactor>
</comment>
<comment type="pathway">
    <text evidence="4">Carbohydrate degradation; glycolysis; pyruvate from D-glyceraldehyde 3-phosphate: step 2/5.</text>
</comment>
<comment type="subunit">
    <text evidence="1">Monomer.</text>
</comment>
<comment type="subcellular location">
    <subcellularLocation>
        <location evidence="4">Cytoplasm</location>
    </subcellularLocation>
    <subcellularLocation>
        <location evidence="4">Mitochondrion</location>
    </subcellularLocation>
</comment>
<comment type="similarity">
    <text evidence="6">Belongs to the phosphoglycerate kinase family.</text>
</comment>
<keyword id="KW-0067">ATP-binding</keyword>
<keyword id="KW-0963">Cytoplasm</keyword>
<keyword id="KW-0324">Glycolysis</keyword>
<keyword id="KW-0418">Kinase</keyword>
<keyword id="KW-0460">Magnesium</keyword>
<keyword id="KW-0479">Metal-binding</keyword>
<keyword id="KW-0496">Mitochondrion</keyword>
<keyword id="KW-0547">Nucleotide-binding</keyword>
<keyword id="KW-0808">Transferase</keyword>
<feature type="chain" id="PRO_0000145885" description="Phosphoglycerate kinase">
    <location>
        <begin position="1"/>
        <end position="417"/>
    </location>
</feature>
<feature type="binding site" evidence="3">
    <location>
        <position position="23"/>
    </location>
    <ligand>
        <name>(2R)-3-phosphoglycerate</name>
        <dbReference type="ChEBI" id="CHEBI:58272"/>
    </ligand>
</feature>
<feature type="binding site" evidence="5">
    <location>
        <position position="24"/>
    </location>
    <ligand>
        <name>(2R)-3-phosphoglycerate</name>
        <dbReference type="ChEBI" id="CHEBI:58272"/>
    </ligand>
</feature>
<feature type="binding site" evidence="3">
    <location>
        <position position="25"/>
    </location>
    <ligand>
        <name>(2R)-3-phosphoglycerate</name>
        <dbReference type="ChEBI" id="CHEBI:58272"/>
    </ligand>
</feature>
<feature type="binding site" evidence="5">
    <location>
        <position position="26"/>
    </location>
    <ligand>
        <name>(2R)-3-phosphoglycerate</name>
        <dbReference type="ChEBI" id="CHEBI:58272"/>
    </ligand>
</feature>
<feature type="binding site" evidence="3">
    <location>
        <position position="39"/>
    </location>
    <ligand>
        <name>(2R)-3-phosphoglycerate</name>
        <dbReference type="ChEBI" id="CHEBI:58272"/>
    </ligand>
</feature>
<feature type="binding site" evidence="5">
    <location>
        <position position="40"/>
    </location>
    <ligand>
        <name>(2R)-3-phosphoglycerate</name>
        <dbReference type="ChEBI" id="CHEBI:58272"/>
    </ligand>
</feature>
<feature type="binding site" evidence="3">
    <location>
        <position position="63"/>
    </location>
    <ligand>
        <name>(2R)-3-phosphoglycerate</name>
        <dbReference type="ChEBI" id="CHEBI:58272"/>
    </ligand>
</feature>
<feature type="binding site" evidence="5">
    <location>
        <position position="64"/>
    </location>
    <ligand>
        <name>(2R)-3-phosphoglycerate</name>
        <dbReference type="ChEBI" id="CHEBI:58272"/>
    </ligand>
</feature>
<feature type="binding site" evidence="3">
    <location>
        <position position="66"/>
    </location>
    <ligand>
        <name>(2R)-3-phosphoglycerate</name>
        <dbReference type="ChEBI" id="CHEBI:58272"/>
    </ligand>
</feature>
<feature type="binding site" evidence="5">
    <location>
        <position position="67"/>
    </location>
    <ligand>
        <name>(2R)-3-phosphoglycerate</name>
        <dbReference type="ChEBI" id="CHEBI:58272"/>
    </ligand>
</feature>
<feature type="binding site" evidence="3">
    <location>
        <position position="122"/>
    </location>
    <ligand>
        <name>(2R)-3-phosphoglycerate</name>
        <dbReference type="ChEBI" id="CHEBI:58272"/>
    </ligand>
</feature>
<feature type="binding site" evidence="5">
    <location>
        <position position="123"/>
    </location>
    <ligand>
        <name>(2R)-3-phosphoglycerate</name>
        <dbReference type="ChEBI" id="CHEBI:58272"/>
    </ligand>
</feature>
<feature type="binding site" evidence="3">
    <location>
        <position position="170"/>
    </location>
    <ligand>
        <name>(2R)-3-phosphoglycerate</name>
        <dbReference type="ChEBI" id="CHEBI:58272"/>
    </ligand>
</feature>
<feature type="binding site" evidence="5">
    <location>
        <position position="171"/>
    </location>
    <ligand>
        <name>(2R)-3-phosphoglycerate</name>
        <dbReference type="ChEBI" id="CHEBI:58272"/>
    </ligand>
</feature>
<feature type="binding site" evidence="3">
    <location>
        <position position="214"/>
    </location>
    <ligand>
        <name>ADP</name>
        <dbReference type="ChEBI" id="CHEBI:456216"/>
    </ligand>
</feature>
<feature type="binding site" evidence="3">
    <location>
        <position position="214"/>
    </location>
    <ligand>
        <name>CDP</name>
        <dbReference type="ChEBI" id="CHEBI:58069"/>
    </ligand>
</feature>
<feature type="binding site" evidence="5">
    <location>
        <position position="215"/>
    </location>
    <ligand>
        <name>AMP</name>
        <dbReference type="ChEBI" id="CHEBI:456215"/>
    </ligand>
</feature>
<feature type="binding site" evidence="5">
    <location>
        <position position="215"/>
    </location>
    <ligand>
        <name>ATP</name>
        <dbReference type="ChEBI" id="CHEBI:30616"/>
    </ligand>
</feature>
<feature type="binding site" evidence="3">
    <location>
        <position position="215"/>
    </location>
    <ligand>
        <name>Mg(2+)</name>
        <dbReference type="ChEBI" id="CHEBI:18420"/>
    </ligand>
</feature>
<feature type="binding site" evidence="5">
    <location>
        <position position="216"/>
    </location>
    <ligand>
        <name>AMP</name>
        <dbReference type="ChEBI" id="CHEBI:456215"/>
    </ligand>
</feature>
<feature type="binding site" evidence="3">
    <location>
        <position position="219"/>
    </location>
    <ligand>
        <name>CDP</name>
        <dbReference type="ChEBI" id="CHEBI:58069"/>
    </ligand>
</feature>
<feature type="binding site" evidence="3">
    <location>
        <position position="219"/>
    </location>
    <ligand>
        <name>Mg(2+)</name>
        <dbReference type="ChEBI" id="CHEBI:18420"/>
    </ligand>
</feature>
<feature type="binding site" evidence="5">
    <location>
        <position position="220"/>
    </location>
    <ligand>
        <name>AMP</name>
        <dbReference type="ChEBI" id="CHEBI:456215"/>
    </ligand>
</feature>
<feature type="binding site" evidence="5">
    <location>
        <position position="220"/>
    </location>
    <ligand>
        <name>ATP</name>
        <dbReference type="ChEBI" id="CHEBI:30616"/>
    </ligand>
</feature>
<feature type="binding site" evidence="3">
    <location>
        <position position="238"/>
    </location>
    <ligand>
        <name>ADP</name>
        <dbReference type="ChEBI" id="CHEBI:456216"/>
    </ligand>
</feature>
<feature type="binding site" evidence="3">
    <location>
        <position position="238"/>
    </location>
    <ligand>
        <name>CDP</name>
        <dbReference type="ChEBI" id="CHEBI:58069"/>
    </ligand>
</feature>
<feature type="binding site" evidence="5">
    <location>
        <position position="239"/>
    </location>
    <ligand>
        <name>AMP</name>
        <dbReference type="ChEBI" id="CHEBI:456215"/>
    </ligand>
</feature>
<feature type="binding site" evidence="5">
    <location>
        <position position="239"/>
    </location>
    <ligand>
        <name>ATP</name>
        <dbReference type="ChEBI" id="CHEBI:30616"/>
    </ligand>
</feature>
<feature type="binding site" evidence="5">
    <location>
        <position position="313"/>
    </location>
    <ligand>
        <name>AMP</name>
        <dbReference type="ChEBI" id="CHEBI:456215"/>
    </ligand>
</feature>
<feature type="binding site" evidence="5">
    <location>
        <position position="313"/>
    </location>
    <ligand>
        <name>ATP</name>
        <dbReference type="ChEBI" id="CHEBI:30616"/>
    </ligand>
</feature>
<feature type="binding site" evidence="3">
    <location>
        <position position="338"/>
    </location>
    <ligand>
        <name>CDP</name>
        <dbReference type="ChEBI" id="CHEBI:58069"/>
    </ligand>
</feature>
<feature type="binding site" evidence="3">
    <location>
        <position position="343"/>
    </location>
    <ligand>
        <name>ADP</name>
        <dbReference type="ChEBI" id="CHEBI:456216"/>
    </ligand>
</feature>
<feature type="binding site" evidence="3">
    <location>
        <position position="343"/>
    </location>
    <ligand>
        <name>CDP</name>
        <dbReference type="ChEBI" id="CHEBI:58069"/>
    </ligand>
</feature>
<feature type="binding site" evidence="5">
    <location>
        <position position="344"/>
    </location>
    <ligand>
        <name>AMP</name>
        <dbReference type="ChEBI" id="CHEBI:456215"/>
    </ligand>
</feature>
<feature type="binding site" evidence="5">
    <location>
        <position position="344"/>
    </location>
    <ligand>
        <name>ATP</name>
        <dbReference type="ChEBI" id="CHEBI:30616"/>
    </ligand>
</feature>
<feature type="binding site" evidence="5">
    <location>
        <position position="375"/>
    </location>
    <ligand>
        <name>ATP</name>
        <dbReference type="ChEBI" id="CHEBI:30616"/>
    </ligand>
</feature>
<feature type="binding site" evidence="5">
    <location>
        <position position="375"/>
    </location>
    <ligand>
        <name>Mg(2+)</name>
        <dbReference type="ChEBI" id="CHEBI:18420"/>
    </ligand>
</feature>
<feature type="binding site" evidence="5">
    <location>
        <position position="376"/>
    </location>
    <ligand>
        <name>ATP</name>
        <dbReference type="ChEBI" id="CHEBI:30616"/>
    </ligand>
</feature>
<reference key="1">
    <citation type="journal article" date="1993" name="Curr. Genet.">
        <title>Cloning and sequencing of the 3-phosphoglycerate kinase (PGK) gene from Penicillium citrinum and its application to heterologous gene expression.</title>
        <authorList>
            <person name="Nara F."/>
            <person name="Watanabe I."/>
            <person name="Serizawa N."/>
        </authorList>
    </citation>
    <scope>NUCLEOTIDE SEQUENCE [GENOMIC DNA]</scope>
</reference>
<evidence type="ECO:0000250" key="1"/>
<evidence type="ECO:0000250" key="2">
    <source>
        <dbReference type="UniProtKB" id="A0A7G5KET3"/>
    </source>
</evidence>
<evidence type="ECO:0000250" key="3">
    <source>
        <dbReference type="UniProtKB" id="P00558"/>
    </source>
</evidence>
<evidence type="ECO:0000250" key="4">
    <source>
        <dbReference type="UniProtKB" id="P00560"/>
    </source>
</evidence>
<evidence type="ECO:0000250" key="5">
    <source>
        <dbReference type="UniProtKB" id="Q7SIB7"/>
    </source>
</evidence>
<evidence type="ECO:0000305" key="6"/>
<proteinExistence type="inferred from homology"/>
<organism>
    <name type="scientific">Penicillium citrinum</name>
    <dbReference type="NCBI Taxonomy" id="5077"/>
    <lineage>
        <taxon>Eukaryota</taxon>
        <taxon>Fungi</taxon>
        <taxon>Dikarya</taxon>
        <taxon>Ascomycota</taxon>
        <taxon>Pezizomycotina</taxon>
        <taxon>Eurotiomycetes</taxon>
        <taxon>Eurotiomycetidae</taxon>
        <taxon>Eurotiales</taxon>
        <taxon>Aspergillaceae</taxon>
        <taxon>Penicillium</taxon>
    </lineage>
</organism>
<protein>
    <recommendedName>
        <fullName>Phosphoglycerate kinase</fullName>
        <ecNumber evidence="4">2.7.2.3</ecNumber>
    </recommendedName>
</protein>
<name>PGK_PENCI</name>